<protein>
    <recommendedName>
        <fullName evidence="1">Ribosome maturation factor RimP</fullName>
    </recommendedName>
</protein>
<name>RIMP_MYCPA</name>
<sequence>MTTGLPSQTQVIELLGGEFARAGYEIEDVVIDAHARPPRITVIADGDDGLDLDAAATLSRSASALLDKLDTIEDHYVLEVSSPGVDRPLRTPKHFRRARGRKVDVVLSDNSTVTGRVGETGDDTIALVVRAGRDWAIREIPLGDVVKAVVQVEFSPPAQAELELAGVGGTDKTEERRK</sequence>
<dbReference type="EMBL" id="AE016958">
    <property type="protein sequence ID" value="AAS05227.1"/>
    <property type="molecule type" value="Genomic_DNA"/>
</dbReference>
<dbReference type="RefSeq" id="WP_003875143.1">
    <property type="nucleotide sequence ID" value="NZ_CP106873.1"/>
</dbReference>
<dbReference type="SMR" id="Q73VV1"/>
<dbReference type="STRING" id="262316.MAP_2910c"/>
<dbReference type="KEGG" id="mpa:MAP_2910c"/>
<dbReference type="eggNOG" id="COG0779">
    <property type="taxonomic scope" value="Bacteria"/>
</dbReference>
<dbReference type="HOGENOM" id="CLU_070525_3_0_11"/>
<dbReference type="Proteomes" id="UP000000580">
    <property type="component" value="Chromosome"/>
</dbReference>
<dbReference type="GO" id="GO:0005829">
    <property type="term" value="C:cytosol"/>
    <property type="evidence" value="ECO:0007669"/>
    <property type="project" value="TreeGrafter"/>
</dbReference>
<dbReference type="GO" id="GO:0000028">
    <property type="term" value="P:ribosomal small subunit assembly"/>
    <property type="evidence" value="ECO:0007669"/>
    <property type="project" value="TreeGrafter"/>
</dbReference>
<dbReference type="GO" id="GO:0006412">
    <property type="term" value="P:translation"/>
    <property type="evidence" value="ECO:0007669"/>
    <property type="project" value="TreeGrafter"/>
</dbReference>
<dbReference type="CDD" id="cd01734">
    <property type="entry name" value="YlxS_C"/>
    <property type="match status" value="1"/>
</dbReference>
<dbReference type="Gene3D" id="3.30.300.70">
    <property type="entry name" value="RimP-like superfamily, N-terminal"/>
    <property type="match status" value="1"/>
</dbReference>
<dbReference type="HAMAP" id="MF_01077">
    <property type="entry name" value="RimP"/>
    <property type="match status" value="1"/>
</dbReference>
<dbReference type="InterPro" id="IPR003728">
    <property type="entry name" value="Ribosome_maturation_RimP"/>
</dbReference>
<dbReference type="InterPro" id="IPR028998">
    <property type="entry name" value="RimP_C"/>
</dbReference>
<dbReference type="InterPro" id="IPR036847">
    <property type="entry name" value="RimP_C_sf"/>
</dbReference>
<dbReference type="InterPro" id="IPR028989">
    <property type="entry name" value="RimP_N"/>
</dbReference>
<dbReference type="InterPro" id="IPR035956">
    <property type="entry name" value="RimP_N_sf"/>
</dbReference>
<dbReference type="NCBIfam" id="NF000930">
    <property type="entry name" value="PRK00092.2-2"/>
    <property type="match status" value="1"/>
</dbReference>
<dbReference type="PANTHER" id="PTHR33867">
    <property type="entry name" value="RIBOSOME MATURATION FACTOR RIMP"/>
    <property type="match status" value="1"/>
</dbReference>
<dbReference type="PANTHER" id="PTHR33867:SF1">
    <property type="entry name" value="RIBOSOME MATURATION FACTOR RIMP"/>
    <property type="match status" value="1"/>
</dbReference>
<dbReference type="Pfam" id="PF17384">
    <property type="entry name" value="DUF150_C"/>
    <property type="match status" value="1"/>
</dbReference>
<dbReference type="Pfam" id="PF02576">
    <property type="entry name" value="RimP_N"/>
    <property type="match status" value="1"/>
</dbReference>
<dbReference type="SUPFAM" id="SSF74942">
    <property type="entry name" value="YhbC-like, C-terminal domain"/>
    <property type="match status" value="1"/>
</dbReference>
<dbReference type="SUPFAM" id="SSF75420">
    <property type="entry name" value="YhbC-like, N-terminal domain"/>
    <property type="match status" value="1"/>
</dbReference>
<feature type="chain" id="PRO_0000181891" description="Ribosome maturation factor RimP">
    <location>
        <begin position="1"/>
        <end position="178"/>
    </location>
</feature>
<reference key="1">
    <citation type="journal article" date="2005" name="Proc. Natl. Acad. Sci. U.S.A.">
        <title>The complete genome sequence of Mycobacterium avium subspecies paratuberculosis.</title>
        <authorList>
            <person name="Li L."/>
            <person name="Bannantine J.P."/>
            <person name="Zhang Q."/>
            <person name="Amonsin A."/>
            <person name="May B.J."/>
            <person name="Alt D."/>
            <person name="Banerji N."/>
            <person name="Kanjilal S."/>
            <person name="Kapur V."/>
        </authorList>
    </citation>
    <scope>NUCLEOTIDE SEQUENCE [LARGE SCALE GENOMIC DNA]</scope>
    <source>
        <strain>ATCC BAA-968 / K-10</strain>
    </source>
</reference>
<evidence type="ECO:0000255" key="1">
    <source>
        <dbReference type="HAMAP-Rule" id="MF_01077"/>
    </source>
</evidence>
<comment type="function">
    <text evidence="1">Required for maturation of 30S ribosomal subunits.</text>
</comment>
<comment type="subcellular location">
    <subcellularLocation>
        <location evidence="1">Cytoplasm</location>
    </subcellularLocation>
</comment>
<comment type="similarity">
    <text evidence="1">Belongs to the RimP family.</text>
</comment>
<proteinExistence type="inferred from homology"/>
<accession>Q73VV1</accession>
<gene>
    <name evidence="1" type="primary">rimP</name>
    <name type="ordered locus">MAP_2910c</name>
</gene>
<organism>
    <name type="scientific">Mycolicibacterium paratuberculosis (strain ATCC BAA-968 / K-10)</name>
    <name type="common">Mycobacterium paratuberculosis</name>
    <dbReference type="NCBI Taxonomy" id="262316"/>
    <lineage>
        <taxon>Bacteria</taxon>
        <taxon>Bacillati</taxon>
        <taxon>Actinomycetota</taxon>
        <taxon>Actinomycetes</taxon>
        <taxon>Mycobacteriales</taxon>
        <taxon>Mycobacteriaceae</taxon>
        <taxon>Mycobacterium</taxon>
        <taxon>Mycobacterium avium complex (MAC)</taxon>
    </lineage>
</organism>
<keyword id="KW-0963">Cytoplasm</keyword>
<keyword id="KW-1185">Reference proteome</keyword>
<keyword id="KW-0690">Ribosome biogenesis</keyword>